<keyword id="KW-0150">Chloroplast</keyword>
<keyword id="KW-0934">Plastid</keyword>
<keyword id="KW-0687">Ribonucleoprotein</keyword>
<keyword id="KW-0689">Ribosomal protein</keyword>
<keyword id="KW-0694">RNA-binding</keyword>
<keyword id="KW-0699">rRNA-binding</keyword>
<feature type="chain" id="PRO_0000125038" description="Large ribosomal subunit protein uL5c">
    <location>
        <begin position="1"/>
        <end position="180"/>
    </location>
</feature>
<evidence type="ECO:0000250" key="1"/>
<evidence type="ECO:0000305" key="2"/>
<dbReference type="EMBL" id="AB001684">
    <property type="protein sequence ID" value="BAA58003.1"/>
    <property type="molecule type" value="Genomic_DNA"/>
</dbReference>
<dbReference type="PIR" id="T07355">
    <property type="entry name" value="T07355"/>
</dbReference>
<dbReference type="RefSeq" id="NP_045927.1">
    <property type="nucleotide sequence ID" value="NC_001865.1"/>
</dbReference>
<dbReference type="SMR" id="P56362"/>
<dbReference type="GeneID" id="809209"/>
<dbReference type="GO" id="GO:0009507">
    <property type="term" value="C:chloroplast"/>
    <property type="evidence" value="ECO:0007669"/>
    <property type="project" value="UniProtKB-SubCell"/>
</dbReference>
<dbReference type="GO" id="GO:1990904">
    <property type="term" value="C:ribonucleoprotein complex"/>
    <property type="evidence" value="ECO:0007669"/>
    <property type="project" value="UniProtKB-KW"/>
</dbReference>
<dbReference type="GO" id="GO:0005840">
    <property type="term" value="C:ribosome"/>
    <property type="evidence" value="ECO:0007669"/>
    <property type="project" value="UniProtKB-KW"/>
</dbReference>
<dbReference type="GO" id="GO:0019843">
    <property type="term" value="F:rRNA binding"/>
    <property type="evidence" value="ECO:0007669"/>
    <property type="project" value="UniProtKB-UniRule"/>
</dbReference>
<dbReference type="GO" id="GO:0003735">
    <property type="term" value="F:structural constituent of ribosome"/>
    <property type="evidence" value="ECO:0007669"/>
    <property type="project" value="InterPro"/>
</dbReference>
<dbReference type="GO" id="GO:0006412">
    <property type="term" value="P:translation"/>
    <property type="evidence" value="ECO:0007669"/>
    <property type="project" value="UniProtKB-UniRule"/>
</dbReference>
<dbReference type="FunFam" id="3.30.1440.10:FF:000001">
    <property type="entry name" value="50S ribosomal protein L5"/>
    <property type="match status" value="1"/>
</dbReference>
<dbReference type="Gene3D" id="3.30.1440.10">
    <property type="match status" value="1"/>
</dbReference>
<dbReference type="HAMAP" id="MF_01333_B">
    <property type="entry name" value="Ribosomal_uL5_B"/>
    <property type="match status" value="1"/>
</dbReference>
<dbReference type="InterPro" id="IPR002132">
    <property type="entry name" value="Ribosomal_uL5"/>
</dbReference>
<dbReference type="InterPro" id="IPR020930">
    <property type="entry name" value="Ribosomal_uL5_bac-type"/>
</dbReference>
<dbReference type="InterPro" id="IPR031309">
    <property type="entry name" value="Ribosomal_uL5_C"/>
</dbReference>
<dbReference type="InterPro" id="IPR022803">
    <property type="entry name" value="Ribosomal_uL5_dom_sf"/>
</dbReference>
<dbReference type="InterPro" id="IPR031310">
    <property type="entry name" value="Ribosomal_uL5_N"/>
</dbReference>
<dbReference type="NCBIfam" id="NF000585">
    <property type="entry name" value="PRK00010.1"/>
    <property type="match status" value="1"/>
</dbReference>
<dbReference type="PANTHER" id="PTHR11994">
    <property type="entry name" value="60S RIBOSOMAL PROTEIN L11-RELATED"/>
    <property type="match status" value="1"/>
</dbReference>
<dbReference type="Pfam" id="PF00281">
    <property type="entry name" value="Ribosomal_L5"/>
    <property type="match status" value="1"/>
</dbReference>
<dbReference type="Pfam" id="PF00673">
    <property type="entry name" value="Ribosomal_L5_C"/>
    <property type="match status" value="1"/>
</dbReference>
<dbReference type="PIRSF" id="PIRSF002161">
    <property type="entry name" value="Ribosomal_L5"/>
    <property type="match status" value="1"/>
</dbReference>
<dbReference type="SUPFAM" id="SSF55282">
    <property type="entry name" value="RL5-like"/>
    <property type="match status" value="1"/>
</dbReference>
<geneLocation type="chloroplast"/>
<name>RK5_CHLVU</name>
<reference key="1">
    <citation type="journal article" date="1997" name="Proc. Natl. Acad. Sci. U.S.A.">
        <title>Complete nucleotide sequence of the chloroplast genome from the green alga Chlorella vulgaris: the existence of genes possibly involved in chloroplast division.</title>
        <authorList>
            <person name="Wakasugi T."/>
            <person name="Nagai T."/>
            <person name="Kapoor M."/>
            <person name="Sugita M."/>
            <person name="Ito M."/>
            <person name="Ito S."/>
            <person name="Tsudzuki J."/>
            <person name="Nakashima K."/>
            <person name="Tsudzuki T."/>
            <person name="Suzuki Y."/>
            <person name="Hamada A."/>
            <person name="Ohta T."/>
            <person name="Inamura A."/>
            <person name="Yoshinaga K."/>
            <person name="Sugiura M."/>
        </authorList>
    </citation>
    <scope>NUCLEOTIDE SEQUENCE [LARGE SCALE GENOMIC DNA]</scope>
    <source>
        <strain>IAM C-27 / Tamiya</strain>
    </source>
</reference>
<organism>
    <name type="scientific">Chlorella vulgaris</name>
    <name type="common">Green alga</name>
    <dbReference type="NCBI Taxonomy" id="3077"/>
    <lineage>
        <taxon>Eukaryota</taxon>
        <taxon>Viridiplantae</taxon>
        <taxon>Chlorophyta</taxon>
        <taxon>core chlorophytes</taxon>
        <taxon>Trebouxiophyceae</taxon>
        <taxon>Chlorellales</taxon>
        <taxon>Chlorellaceae</taxon>
        <taxon>Chlorella clade</taxon>
        <taxon>Chlorella</taxon>
    </lineage>
</organism>
<gene>
    <name type="primary">rpl5</name>
</gene>
<proteinExistence type="inferred from homology"/>
<comment type="function">
    <text evidence="1">Binds 5S rRNA, forms part of the central protuberance of the 50S subunit.</text>
</comment>
<comment type="subunit">
    <text evidence="1">Part of the 50S ribosomal subunit; contacts the 5S rRNA.</text>
</comment>
<comment type="subcellular location">
    <subcellularLocation>
        <location>Plastid</location>
        <location>Chloroplast</location>
    </subcellularLocation>
</comment>
<comment type="similarity">
    <text evidence="2">Belongs to the universal ribosomal protein uL5 family.</text>
</comment>
<accession>P56362</accession>
<protein>
    <recommendedName>
        <fullName evidence="2">Large ribosomal subunit protein uL5c</fullName>
    </recommendedName>
    <alternativeName>
        <fullName>50S ribosomal protein L5, chloroplastic</fullName>
    </alternativeName>
</protein>
<sequence>MVQRLDSFYQEQSIPQLIKEFHYKNKHQVPKLDKIVINRGLGDASQNAKVLESCSKEQSIITRQQGVVTRSKKAIASFKLREKMPVGLVVTLRGDKMYAFLDRLINLALPRIRDFQGVSRKSFDGRGNYSLGLEEQLMFPEIDYDKIDQIRGMDVSIVTTAKTDKEAMALFKTFGMPFKN</sequence>